<evidence type="ECO:0000255" key="1">
    <source>
        <dbReference type="HAMAP-Rule" id="MF_00133"/>
    </source>
</evidence>
<gene>
    <name evidence="1" type="primary">trpB</name>
    <name type="ordered locus">JJD26997_1611</name>
</gene>
<protein>
    <recommendedName>
        <fullName evidence="1">Tryptophan synthase beta chain</fullName>
        <ecNumber evidence="1">4.2.1.20</ecNumber>
    </recommendedName>
</protein>
<dbReference type="EC" id="4.2.1.20" evidence="1"/>
<dbReference type="EMBL" id="CP000768">
    <property type="protein sequence ID" value="ABS44275.1"/>
    <property type="molecule type" value="Genomic_DNA"/>
</dbReference>
<dbReference type="SMR" id="A7H523"/>
<dbReference type="KEGG" id="cjd:JJD26997_1611"/>
<dbReference type="HOGENOM" id="CLU_016734_3_1_7"/>
<dbReference type="UniPathway" id="UPA00035">
    <property type="reaction ID" value="UER00044"/>
</dbReference>
<dbReference type="Proteomes" id="UP000002302">
    <property type="component" value="Chromosome"/>
</dbReference>
<dbReference type="GO" id="GO:0005737">
    <property type="term" value="C:cytoplasm"/>
    <property type="evidence" value="ECO:0007669"/>
    <property type="project" value="TreeGrafter"/>
</dbReference>
<dbReference type="GO" id="GO:0004834">
    <property type="term" value="F:tryptophan synthase activity"/>
    <property type="evidence" value="ECO:0007669"/>
    <property type="project" value="UniProtKB-UniRule"/>
</dbReference>
<dbReference type="CDD" id="cd06446">
    <property type="entry name" value="Trp-synth_B"/>
    <property type="match status" value="1"/>
</dbReference>
<dbReference type="FunFam" id="3.40.50.1100:FF:000004">
    <property type="entry name" value="Tryptophan synthase beta chain"/>
    <property type="match status" value="1"/>
</dbReference>
<dbReference type="Gene3D" id="3.40.50.1100">
    <property type="match status" value="2"/>
</dbReference>
<dbReference type="HAMAP" id="MF_00133">
    <property type="entry name" value="Trp_synth_beta"/>
    <property type="match status" value="1"/>
</dbReference>
<dbReference type="InterPro" id="IPR006653">
    <property type="entry name" value="Trp_synth_b_CS"/>
</dbReference>
<dbReference type="InterPro" id="IPR006654">
    <property type="entry name" value="Trp_synth_beta"/>
</dbReference>
<dbReference type="InterPro" id="IPR023026">
    <property type="entry name" value="Trp_synth_beta/beta-like"/>
</dbReference>
<dbReference type="InterPro" id="IPR001926">
    <property type="entry name" value="TrpB-like_PALP"/>
</dbReference>
<dbReference type="InterPro" id="IPR036052">
    <property type="entry name" value="TrpB-like_PALP_sf"/>
</dbReference>
<dbReference type="NCBIfam" id="TIGR00263">
    <property type="entry name" value="trpB"/>
    <property type="match status" value="1"/>
</dbReference>
<dbReference type="PANTHER" id="PTHR48077:SF3">
    <property type="entry name" value="TRYPTOPHAN SYNTHASE"/>
    <property type="match status" value="1"/>
</dbReference>
<dbReference type="PANTHER" id="PTHR48077">
    <property type="entry name" value="TRYPTOPHAN SYNTHASE-RELATED"/>
    <property type="match status" value="1"/>
</dbReference>
<dbReference type="Pfam" id="PF00291">
    <property type="entry name" value="PALP"/>
    <property type="match status" value="1"/>
</dbReference>
<dbReference type="PIRSF" id="PIRSF001413">
    <property type="entry name" value="Trp_syn_beta"/>
    <property type="match status" value="1"/>
</dbReference>
<dbReference type="SUPFAM" id="SSF53686">
    <property type="entry name" value="Tryptophan synthase beta subunit-like PLP-dependent enzymes"/>
    <property type="match status" value="1"/>
</dbReference>
<dbReference type="PROSITE" id="PS00168">
    <property type="entry name" value="TRP_SYNTHASE_BETA"/>
    <property type="match status" value="1"/>
</dbReference>
<feature type="chain" id="PRO_1000018331" description="Tryptophan synthase beta chain">
    <location>
        <begin position="1"/>
        <end position="392"/>
    </location>
</feature>
<feature type="modified residue" description="N6-(pyridoxal phosphate)lysine" evidence="1">
    <location>
        <position position="84"/>
    </location>
</feature>
<proteinExistence type="inferred from homology"/>
<sequence length="392" mass="43012">MKKAYYGDFGGQFLPESAMFALNELENAFLKFSKDKFFKKELSELLKTYVGRPTPLYFARNLSKKYQHEIYLKREDLNHTGAHKINNAIAQALLAKKMGKKKIIAETGAGQHGLATATAAALLGLECEIYMGATDVQRQALNVYKMELLGAKIHAVQSGLKTLKEATTAAIQAWVGDIKNIFYVVGSAVGPYPYPKMVTHFQSIIGKECKMQLQKLNKKVDYIIAAVGGGSNAAGIFYDFIKDENVKLIGIEAGGLGVDTLYHAATLNKGETGIIHGMKTKVLQDDLGNILPVHSVSAGLDYPGIGPLHAFLFESKRAQYHAISDEECMQALKLLCKEEGIIAAIESSHALAFLEKLCPTLKKKSVIVINLSGRGDKDMQMIREYKKGVIYG</sequence>
<name>TRPB_CAMJD</name>
<comment type="function">
    <text evidence="1">The beta subunit is responsible for the synthesis of L-tryptophan from indole and L-serine.</text>
</comment>
<comment type="catalytic activity">
    <reaction evidence="1">
        <text>(1S,2R)-1-C-(indol-3-yl)glycerol 3-phosphate + L-serine = D-glyceraldehyde 3-phosphate + L-tryptophan + H2O</text>
        <dbReference type="Rhea" id="RHEA:10532"/>
        <dbReference type="ChEBI" id="CHEBI:15377"/>
        <dbReference type="ChEBI" id="CHEBI:33384"/>
        <dbReference type="ChEBI" id="CHEBI:57912"/>
        <dbReference type="ChEBI" id="CHEBI:58866"/>
        <dbReference type="ChEBI" id="CHEBI:59776"/>
        <dbReference type="EC" id="4.2.1.20"/>
    </reaction>
</comment>
<comment type="cofactor">
    <cofactor evidence="1">
        <name>pyridoxal 5'-phosphate</name>
        <dbReference type="ChEBI" id="CHEBI:597326"/>
    </cofactor>
</comment>
<comment type="pathway">
    <text evidence="1">Amino-acid biosynthesis; L-tryptophan biosynthesis; L-tryptophan from chorismate: step 5/5.</text>
</comment>
<comment type="subunit">
    <text evidence="1">Tetramer of two alpha and two beta chains.</text>
</comment>
<comment type="similarity">
    <text evidence="1">Belongs to the TrpB family.</text>
</comment>
<accession>A7H523</accession>
<organism>
    <name type="scientific">Campylobacter jejuni subsp. doylei (strain ATCC BAA-1458 / RM4099 / 269.97)</name>
    <dbReference type="NCBI Taxonomy" id="360109"/>
    <lineage>
        <taxon>Bacteria</taxon>
        <taxon>Pseudomonadati</taxon>
        <taxon>Campylobacterota</taxon>
        <taxon>Epsilonproteobacteria</taxon>
        <taxon>Campylobacterales</taxon>
        <taxon>Campylobacteraceae</taxon>
        <taxon>Campylobacter</taxon>
    </lineage>
</organism>
<keyword id="KW-0028">Amino-acid biosynthesis</keyword>
<keyword id="KW-0057">Aromatic amino acid biosynthesis</keyword>
<keyword id="KW-0456">Lyase</keyword>
<keyword id="KW-0663">Pyridoxal phosphate</keyword>
<keyword id="KW-0822">Tryptophan biosynthesis</keyword>
<reference key="1">
    <citation type="submission" date="2007-07" db="EMBL/GenBank/DDBJ databases">
        <title>Complete genome sequence of Campylobacter jejuni subsp doylei 269.97 isolated from human blood.</title>
        <authorList>
            <person name="Fouts D.E."/>
            <person name="Mongodin E.F."/>
            <person name="Puiu D."/>
            <person name="Sebastian Y."/>
            <person name="Miller W.G."/>
            <person name="Mandrell R.E."/>
            <person name="Lastovica A.J."/>
            <person name="Nelson K.E."/>
        </authorList>
    </citation>
    <scope>NUCLEOTIDE SEQUENCE [LARGE SCALE GENOMIC DNA]</scope>
    <source>
        <strain>ATCC BAA-1458 / RM4099 / 269.97</strain>
    </source>
</reference>